<evidence type="ECO:0000255" key="1">
    <source>
        <dbReference type="PROSITE-ProRule" id="PRU01097"/>
    </source>
</evidence>
<evidence type="ECO:0000255" key="2">
    <source>
        <dbReference type="PROSITE-ProRule" id="PRU10062"/>
    </source>
</evidence>
<evidence type="ECO:0000255" key="3">
    <source>
        <dbReference type="PROSITE-ProRule" id="PRU10063"/>
    </source>
</evidence>
<evidence type="ECO:0000269" key="4">
    <source>
    </source>
</evidence>
<evidence type="ECO:0000269" key="5">
    <source ref="4"/>
</evidence>
<evidence type="ECO:0000305" key="6"/>
<evidence type="ECO:0007829" key="7">
    <source>
        <dbReference type="PDB" id="5TVY"/>
    </source>
</evidence>
<dbReference type="EC" id="3.2.1.8"/>
<dbReference type="EMBL" id="M36648">
    <property type="protein sequence ID" value="AAA22897.1"/>
    <property type="molecule type" value="Genomic_DNA"/>
</dbReference>
<dbReference type="EMBL" id="AF027868">
    <property type="protein sequence ID" value="AAB84458.1"/>
    <property type="molecule type" value="Genomic_DNA"/>
</dbReference>
<dbReference type="EMBL" id="AL009126">
    <property type="protein sequence ID" value="CAB13776.1"/>
    <property type="molecule type" value="Genomic_DNA"/>
</dbReference>
<dbReference type="PIR" id="I40569">
    <property type="entry name" value="I40569"/>
</dbReference>
<dbReference type="RefSeq" id="NP_389765.1">
    <property type="nucleotide sequence ID" value="NC_000964.3"/>
</dbReference>
<dbReference type="RefSeq" id="WP_003231377.1">
    <property type="nucleotide sequence ID" value="NZ_OZ025638.1"/>
</dbReference>
<dbReference type="PDB" id="1AXK">
    <property type="method" value="X-ray"/>
    <property type="resolution" value="2.10 A"/>
    <property type="chains" value="A/B=29-213"/>
</dbReference>
<dbReference type="PDB" id="1XXN">
    <property type="method" value="X-ray"/>
    <property type="resolution" value="1.70 A"/>
    <property type="chains" value="A=29-213"/>
</dbReference>
<dbReference type="PDB" id="2B42">
    <property type="method" value="X-ray"/>
    <property type="resolution" value="2.50 A"/>
    <property type="chains" value="B=29-213"/>
</dbReference>
<dbReference type="PDB" id="2B45">
    <property type="method" value="X-ray"/>
    <property type="resolution" value="2.00 A"/>
    <property type="chains" value="X=29-213"/>
</dbReference>
<dbReference type="PDB" id="2B46">
    <property type="method" value="X-ray"/>
    <property type="resolution" value="2.21 A"/>
    <property type="chains" value="X=29-213"/>
</dbReference>
<dbReference type="PDB" id="2DCY">
    <property type="method" value="X-ray"/>
    <property type="resolution" value="1.40 A"/>
    <property type="chains" value="A/B/C/D/E=29-213"/>
</dbReference>
<dbReference type="PDB" id="2DCZ">
    <property type="method" value="X-ray"/>
    <property type="resolution" value="1.90 A"/>
    <property type="chains" value="A/B=29-213"/>
</dbReference>
<dbReference type="PDB" id="2QZ3">
    <property type="method" value="X-ray"/>
    <property type="resolution" value="1.80 A"/>
    <property type="chains" value="A/B=29-213"/>
</dbReference>
<dbReference type="PDB" id="2Z79">
    <property type="method" value="X-ray"/>
    <property type="resolution" value="1.30 A"/>
    <property type="chains" value="A/B=29-213"/>
</dbReference>
<dbReference type="PDB" id="3EXU">
    <property type="method" value="X-ray"/>
    <property type="resolution" value="1.81 A"/>
    <property type="chains" value="A/B=29-213"/>
</dbReference>
<dbReference type="PDB" id="3HD8">
    <property type="method" value="X-ray"/>
    <property type="resolution" value="2.39 A"/>
    <property type="chains" value="B/D=29-213"/>
</dbReference>
<dbReference type="PDB" id="5K9Y">
    <property type="method" value="X-ray"/>
    <property type="resolution" value="2.20 A"/>
    <property type="chains" value="A/B=29-213"/>
</dbReference>
<dbReference type="PDB" id="5TVV">
    <property type="method" value="X-ray"/>
    <property type="resolution" value="1.79 A"/>
    <property type="chains" value="A/B/C=30-213"/>
</dbReference>
<dbReference type="PDB" id="5TVY">
    <property type="method" value="X-ray"/>
    <property type="resolution" value="1.00 A"/>
    <property type="chains" value="A/B=30-213"/>
</dbReference>
<dbReference type="PDB" id="5TZO">
    <property type="method" value="X-ray"/>
    <property type="resolution" value="1.67 A"/>
    <property type="chains" value="A/B/C=30-213"/>
</dbReference>
<dbReference type="PDBsum" id="1AXK"/>
<dbReference type="PDBsum" id="1XXN"/>
<dbReference type="PDBsum" id="2B42"/>
<dbReference type="PDBsum" id="2B45"/>
<dbReference type="PDBsum" id="2B46"/>
<dbReference type="PDBsum" id="2DCY"/>
<dbReference type="PDBsum" id="2DCZ"/>
<dbReference type="PDBsum" id="2QZ3"/>
<dbReference type="PDBsum" id="2Z79"/>
<dbReference type="PDBsum" id="3EXU"/>
<dbReference type="PDBsum" id="3HD8"/>
<dbReference type="PDBsum" id="5K9Y"/>
<dbReference type="PDBsum" id="5TVV"/>
<dbReference type="PDBsum" id="5TVY"/>
<dbReference type="PDBsum" id="5TZO"/>
<dbReference type="BMRB" id="P18429"/>
<dbReference type="SMR" id="P18429"/>
<dbReference type="FunCoup" id="P18429">
    <property type="interactions" value="9"/>
</dbReference>
<dbReference type="IntAct" id="P18429">
    <property type="interactions" value="2"/>
</dbReference>
<dbReference type="MINT" id="P18429"/>
<dbReference type="STRING" id="224308.BSU18840"/>
<dbReference type="CAZy" id="GH11">
    <property type="family name" value="Glycoside Hydrolase Family 11"/>
</dbReference>
<dbReference type="PaxDb" id="224308-BSU18840"/>
<dbReference type="EnsemblBacteria" id="CAB13776">
    <property type="protein sequence ID" value="CAB13776"/>
    <property type="gene ID" value="BSU_18840"/>
</dbReference>
<dbReference type="GeneID" id="939861"/>
<dbReference type="KEGG" id="bsu:BSU18840"/>
<dbReference type="PATRIC" id="fig|224308.179.peg.2054"/>
<dbReference type="eggNOG" id="COG0726">
    <property type="taxonomic scope" value="Bacteria"/>
</dbReference>
<dbReference type="InParanoid" id="P18429"/>
<dbReference type="OrthoDB" id="9806342at2"/>
<dbReference type="PhylomeDB" id="P18429"/>
<dbReference type="BioCyc" id="BSUB:BSU18840-MONOMER"/>
<dbReference type="BRENDA" id="3.2.1.8">
    <property type="organism ID" value="658"/>
</dbReference>
<dbReference type="SABIO-RK" id="P18429"/>
<dbReference type="UniPathway" id="UPA00114"/>
<dbReference type="EvolutionaryTrace" id="P18429"/>
<dbReference type="Proteomes" id="UP000001570">
    <property type="component" value="Chromosome"/>
</dbReference>
<dbReference type="GO" id="GO:0031176">
    <property type="term" value="F:endo-1,4-beta-xylanase activity"/>
    <property type="evidence" value="ECO:0007669"/>
    <property type="project" value="UniProtKB-EC"/>
</dbReference>
<dbReference type="GO" id="GO:0045493">
    <property type="term" value="P:xylan catabolic process"/>
    <property type="evidence" value="ECO:0000318"/>
    <property type="project" value="GO_Central"/>
</dbReference>
<dbReference type="FunFam" id="2.60.120.180:FF:000001">
    <property type="entry name" value="Endo-1,4-beta-xylanase"/>
    <property type="match status" value="1"/>
</dbReference>
<dbReference type="Gene3D" id="2.60.120.180">
    <property type="match status" value="1"/>
</dbReference>
<dbReference type="InterPro" id="IPR013320">
    <property type="entry name" value="ConA-like_dom_sf"/>
</dbReference>
<dbReference type="InterPro" id="IPR013319">
    <property type="entry name" value="GH11/12"/>
</dbReference>
<dbReference type="InterPro" id="IPR018208">
    <property type="entry name" value="GH11_AS_1"/>
</dbReference>
<dbReference type="InterPro" id="IPR033119">
    <property type="entry name" value="GH11_AS_2"/>
</dbReference>
<dbReference type="InterPro" id="IPR033123">
    <property type="entry name" value="GH11_dom"/>
</dbReference>
<dbReference type="InterPro" id="IPR001137">
    <property type="entry name" value="Glyco_hydro_11"/>
</dbReference>
<dbReference type="PANTHER" id="PTHR46828">
    <property type="entry name" value="ENDO-1,4-BETA-XYLANASE A-RELATED"/>
    <property type="match status" value="1"/>
</dbReference>
<dbReference type="PANTHER" id="PTHR46828:SF2">
    <property type="entry name" value="ENDO-1,4-BETA-XYLANASE A-RELATED"/>
    <property type="match status" value="1"/>
</dbReference>
<dbReference type="Pfam" id="PF00457">
    <property type="entry name" value="Glyco_hydro_11"/>
    <property type="match status" value="1"/>
</dbReference>
<dbReference type="PRINTS" id="PR00911">
    <property type="entry name" value="GLHYDRLASE11"/>
</dbReference>
<dbReference type="SUPFAM" id="SSF49899">
    <property type="entry name" value="Concanavalin A-like lectins/glucanases"/>
    <property type="match status" value="1"/>
</dbReference>
<dbReference type="PROSITE" id="PS00776">
    <property type="entry name" value="GH11_1"/>
    <property type="match status" value="1"/>
</dbReference>
<dbReference type="PROSITE" id="PS00777">
    <property type="entry name" value="GH11_2"/>
    <property type="match status" value="1"/>
</dbReference>
<dbReference type="PROSITE" id="PS51761">
    <property type="entry name" value="GH11_3"/>
    <property type="match status" value="1"/>
</dbReference>
<accession>P18429</accession>
<reference key="1">
    <citation type="journal article" date="1986" name="Arch. Microbiol.">
        <title>A xylanase gene from Bacillus subtilis: nucleotide sequence and comparison with B. pumilus gene.</title>
        <authorList>
            <person name="Paice M.G."/>
            <person name="Bourbonnais R."/>
            <person name="Desrochers M."/>
            <person name="Jurasek L."/>
            <person name="Yaguchi M."/>
        </authorList>
    </citation>
    <scope>NUCLEOTIDE SEQUENCE [GENOMIC DNA]</scope>
</reference>
<reference key="2">
    <citation type="submission" date="1997-11" db="EMBL/GenBank/DDBJ databases">
        <title>Sequence analysis of the Bacillus subtilis chromosome region between the terC and odhAB loci cloned in a yeast artificial chromosome.</title>
        <authorList>
            <person name="Lapidus A."/>
            <person name="Galleron N."/>
            <person name="Sorokin A."/>
            <person name="Ehrlich S.D."/>
        </authorList>
    </citation>
    <scope>NUCLEOTIDE SEQUENCE [GENOMIC DNA]</scope>
</reference>
<reference key="3">
    <citation type="journal article" date="1997" name="Nature">
        <title>The complete genome sequence of the Gram-positive bacterium Bacillus subtilis.</title>
        <authorList>
            <person name="Kunst F."/>
            <person name="Ogasawara N."/>
            <person name="Moszer I."/>
            <person name="Albertini A.M."/>
            <person name="Alloni G."/>
            <person name="Azevedo V."/>
            <person name="Bertero M.G."/>
            <person name="Bessieres P."/>
            <person name="Bolotin A."/>
            <person name="Borchert S."/>
            <person name="Borriss R."/>
            <person name="Boursier L."/>
            <person name="Brans A."/>
            <person name="Braun M."/>
            <person name="Brignell S.C."/>
            <person name="Bron S."/>
            <person name="Brouillet S."/>
            <person name="Bruschi C.V."/>
            <person name="Caldwell B."/>
            <person name="Capuano V."/>
            <person name="Carter N.M."/>
            <person name="Choi S.-K."/>
            <person name="Codani J.-J."/>
            <person name="Connerton I.F."/>
            <person name="Cummings N.J."/>
            <person name="Daniel R.A."/>
            <person name="Denizot F."/>
            <person name="Devine K.M."/>
            <person name="Duesterhoeft A."/>
            <person name="Ehrlich S.D."/>
            <person name="Emmerson P.T."/>
            <person name="Entian K.-D."/>
            <person name="Errington J."/>
            <person name="Fabret C."/>
            <person name="Ferrari E."/>
            <person name="Foulger D."/>
            <person name="Fritz C."/>
            <person name="Fujita M."/>
            <person name="Fujita Y."/>
            <person name="Fuma S."/>
            <person name="Galizzi A."/>
            <person name="Galleron N."/>
            <person name="Ghim S.-Y."/>
            <person name="Glaser P."/>
            <person name="Goffeau A."/>
            <person name="Golightly E.J."/>
            <person name="Grandi G."/>
            <person name="Guiseppi G."/>
            <person name="Guy B.J."/>
            <person name="Haga K."/>
            <person name="Haiech J."/>
            <person name="Harwood C.R."/>
            <person name="Henaut A."/>
            <person name="Hilbert H."/>
            <person name="Holsappel S."/>
            <person name="Hosono S."/>
            <person name="Hullo M.-F."/>
            <person name="Itaya M."/>
            <person name="Jones L.-M."/>
            <person name="Joris B."/>
            <person name="Karamata D."/>
            <person name="Kasahara Y."/>
            <person name="Klaerr-Blanchard M."/>
            <person name="Klein C."/>
            <person name="Kobayashi Y."/>
            <person name="Koetter P."/>
            <person name="Koningstein G."/>
            <person name="Krogh S."/>
            <person name="Kumano M."/>
            <person name="Kurita K."/>
            <person name="Lapidus A."/>
            <person name="Lardinois S."/>
            <person name="Lauber J."/>
            <person name="Lazarevic V."/>
            <person name="Lee S.-M."/>
            <person name="Levine A."/>
            <person name="Liu H."/>
            <person name="Masuda S."/>
            <person name="Mauel C."/>
            <person name="Medigue C."/>
            <person name="Medina N."/>
            <person name="Mellado R.P."/>
            <person name="Mizuno M."/>
            <person name="Moestl D."/>
            <person name="Nakai S."/>
            <person name="Noback M."/>
            <person name="Noone D."/>
            <person name="O'Reilly M."/>
            <person name="Ogawa K."/>
            <person name="Ogiwara A."/>
            <person name="Oudega B."/>
            <person name="Park S.-H."/>
            <person name="Parro V."/>
            <person name="Pohl T.M."/>
            <person name="Portetelle D."/>
            <person name="Porwollik S."/>
            <person name="Prescott A.M."/>
            <person name="Presecan E."/>
            <person name="Pujic P."/>
            <person name="Purnelle B."/>
            <person name="Rapoport G."/>
            <person name="Rey M."/>
            <person name="Reynolds S."/>
            <person name="Rieger M."/>
            <person name="Rivolta C."/>
            <person name="Rocha E."/>
            <person name="Roche B."/>
            <person name="Rose M."/>
            <person name="Sadaie Y."/>
            <person name="Sato T."/>
            <person name="Scanlan E."/>
            <person name="Schleich S."/>
            <person name="Schroeter R."/>
            <person name="Scoffone F."/>
            <person name="Sekiguchi J."/>
            <person name="Sekowska A."/>
            <person name="Seror S.J."/>
            <person name="Serror P."/>
            <person name="Shin B.-S."/>
            <person name="Soldo B."/>
            <person name="Sorokin A."/>
            <person name="Tacconi E."/>
            <person name="Takagi T."/>
            <person name="Takahashi H."/>
            <person name="Takemaru K."/>
            <person name="Takeuchi M."/>
            <person name="Tamakoshi A."/>
            <person name="Tanaka T."/>
            <person name="Terpstra P."/>
            <person name="Tognoni A."/>
            <person name="Tosato V."/>
            <person name="Uchiyama S."/>
            <person name="Vandenbol M."/>
            <person name="Vannier F."/>
            <person name="Vassarotti A."/>
            <person name="Viari A."/>
            <person name="Wambutt R."/>
            <person name="Wedler E."/>
            <person name="Wedler H."/>
            <person name="Weitzenegger T."/>
            <person name="Winters P."/>
            <person name="Wipat A."/>
            <person name="Yamamoto H."/>
            <person name="Yamane K."/>
            <person name="Yasumoto K."/>
            <person name="Yata K."/>
            <person name="Yoshida K."/>
            <person name="Yoshikawa H.-F."/>
            <person name="Zumstein E."/>
            <person name="Yoshikawa H."/>
            <person name="Danchin A."/>
        </authorList>
    </citation>
    <scope>NUCLEOTIDE SEQUENCE [LARGE SCALE GENOMIC DNA]</scope>
    <source>
        <strain>168</strain>
    </source>
</reference>
<reference key="4">
    <citation type="book" date="1992" name="Xylans and xylanases">
        <editorList>
            <person name="Visser J."/>
            <person name="Beldman G."/>
            <person name="Kusters-van Someren M.A."/>
            <person name="Voragen A.G.J."/>
        </editorList>
        <authorList>
            <person name="Wakarchuk W."/>
            <person name="Methot N."/>
            <person name="Lanthier P."/>
            <person name="Sung W."/>
            <person name="Seligy V."/>
            <person name="Yaguchi M."/>
            <person name="To R."/>
            <person name="Campbell R."/>
            <person name="Rose D."/>
        </authorList>
    </citation>
    <scope>MUTAGENESIS</scope>
</reference>
<reference key="5">
    <citation type="journal article" date="1994" name="Biochemistry">
        <title>Identification of glutamic acid 78 as the active site nucleophile in Bacillus subtilis xylanase using electrospray tandem mass spectrometry.</title>
        <authorList>
            <person name="Miao S."/>
            <person name="Ziser L."/>
            <person name="Aebersold R."/>
            <person name="Withers S.G."/>
        </authorList>
    </citation>
    <scope>ACTIVE SITE GLU-106</scope>
</reference>
<proteinExistence type="evidence at protein level"/>
<name>XYNA_BACSU</name>
<sequence>MFKFKKNFLVGLSAALMSISLFSATASAASTDYWQNWTDGGGIVNAVNGSGGNYSVNWSNTGNFVVGKGWTTGSPFRTINYNAGVWAPNGNGYLTLYGWTRSPLIEYYVVDSWGTYRPTGTYKGTVKSDGGTYDIYTTTRYNAPSIDGDRTTFTQYWSVRQSKRPTGSNATITFSNHVNAWKSHGMNLGSNWAYQVMATEGYQSSGSSNVTVW</sequence>
<protein>
    <recommendedName>
        <fullName>Endo-1,4-beta-xylanase A</fullName>
        <shortName>Xylanase A</shortName>
        <ecNumber>3.2.1.8</ecNumber>
    </recommendedName>
    <alternativeName>
        <fullName>1,4-beta-D-xylan xylanohydrolase A</fullName>
    </alternativeName>
</protein>
<comment type="catalytic activity">
    <reaction>
        <text>Endohydrolysis of (1-&gt;4)-beta-D-xylosidic linkages in xylans.</text>
        <dbReference type="EC" id="3.2.1.8"/>
    </reaction>
</comment>
<comment type="pathway">
    <text>Glycan degradation; xylan degradation.</text>
</comment>
<comment type="similarity">
    <text evidence="6">Belongs to the glycosyl hydrolase 11 (cellulase G) family.</text>
</comment>
<feature type="signal peptide">
    <location>
        <begin position="1"/>
        <end position="28"/>
    </location>
</feature>
<feature type="chain" id="PRO_0000007999" description="Endo-1,4-beta-xylanase A">
    <location>
        <begin position="29"/>
        <end position="213"/>
    </location>
</feature>
<feature type="domain" description="GH11" evidence="1">
    <location>
        <begin position="29"/>
        <end position="213"/>
    </location>
</feature>
<feature type="active site" description="Nucleophile" evidence="2 4">
    <location>
        <position position="106"/>
    </location>
</feature>
<feature type="active site" description="Proton donor" evidence="3">
    <location>
        <position position="200"/>
    </location>
</feature>
<feature type="mutagenesis site" description="Drastically reduced activity." evidence="5">
    <original>E</original>
    <variation>S</variation>
    <location>
        <position position="106"/>
    </location>
</feature>
<feature type="mutagenesis site" description="Drastically reduced activity." evidence="5">
    <original>E</original>
    <variation>S</variation>
    <location>
        <position position="200"/>
    </location>
</feature>
<feature type="strand" evidence="7">
    <location>
        <begin position="33"/>
        <end position="38"/>
    </location>
</feature>
<feature type="strand" evidence="7">
    <location>
        <begin position="42"/>
        <end position="48"/>
    </location>
</feature>
<feature type="strand" evidence="7">
    <location>
        <begin position="53"/>
        <end position="60"/>
    </location>
</feature>
<feature type="strand" evidence="7">
    <location>
        <begin position="62"/>
        <end position="72"/>
    </location>
</feature>
<feature type="strand" evidence="7">
    <location>
        <begin position="78"/>
        <end position="88"/>
    </location>
</feature>
<feature type="strand" evidence="7">
    <location>
        <begin position="90"/>
        <end position="101"/>
    </location>
</feature>
<feature type="turn" evidence="7">
    <location>
        <begin position="102"/>
        <end position="104"/>
    </location>
</feature>
<feature type="strand" evidence="7">
    <location>
        <begin position="105"/>
        <end position="116"/>
    </location>
</feature>
<feature type="strand" evidence="7">
    <location>
        <begin position="121"/>
        <end position="128"/>
    </location>
</feature>
<feature type="strand" evidence="7">
    <location>
        <begin position="131"/>
        <end position="145"/>
    </location>
</feature>
<feature type="strand" evidence="7">
    <location>
        <begin position="148"/>
        <end position="162"/>
    </location>
</feature>
<feature type="strand" evidence="7">
    <location>
        <begin position="170"/>
        <end position="173"/>
    </location>
</feature>
<feature type="helix" evidence="7">
    <location>
        <begin position="174"/>
        <end position="183"/>
    </location>
</feature>
<feature type="strand" evidence="7">
    <location>
        <begin position="190"/>
        <end position="203"/>
    </location>
</feature>
<feature type="strand" evidence="7">
    <location>
        <begin position="206"/>
        <end position="213"/>
    </location>
</feature>
<keyword id="KW-0002">3D-structure</keyword>
<keyword id="KW-0119">Carbohydrate metabolism</keyword>
<keyword id="KW-0326">Glycosidase</keyword>
<keyword id="KW-0378">Hydrolase</keyword>
<keyword id="KW-0624">Polysaccharide degradation</keyword>
<keyword id="KW-1185">Reference proteome</keyword>
<keyword id="KW-0732">Signal</keyword>
<keyword id="KW-0858">Xylan degradation</keyword>
<gene>
    <name type="primary">xynA</name>
    <name type="ordered locus">BSU18840</name>
</gene>
<organism>
    <name type="scientific">Bacillus subtilis (strain 168)</name>
    <dbReference type="NCBI Taxonomy" id="224308"/>
    <lineage>
        <taxon>Bacteria</taxon>
        <taxon>Bacillati</taxon>
        <taxon>Bacillota</taxon>
        <taxon>Bacilli</taxon>
        <taxon>Bacillales</taxon>
        <taxon>Bacillaceae</taxon>
        <taxon>Bacillus</taxon>
    </lineage>
</organism>